<keyword id="KW-0149">Chlorophyll biosynthesis</keyword>
<keyword id="KW-0408">Iron</keyword>
<keyword id="KW-0479">Metal-binding</keyword>
<keyword id="KW-0521">NADP</keyword>
<keyword id="KW-0560">Oxidoreductase</keyword>
<keyword id="KW-0602">Photosynthesis</keyword>
<protein>
    <recommendedName>
        <fullName evidence="1">Magnesium-protoporphyrin IX monomethyl ester [oxidative] cyclase</fullName>
        <shortName evidence="1">Mg-protoporphyrin IX monomethyl ester oxidative cyclase</shortName>
        <ecNumber evidence="1">1.14.13.81</ecNumber>
    </recommendedName>
</protein>
<feature type="chain" id="PRO_0000217538" description="Magnesium-protoporphyrin IX monomethyl ester [oxidative] cyclase">
    <location>
        <begin position="1"/>
        <end position="356"/>
    </location>
</feature>
<dbReference type="EC" id="1.14.13.81" evidence="1"/>
<dbReference type="EMBL" id="BX569692">
    <property type="protein sequence ID" value="CAE07713.1"/>
    <property type="molecule type" value="Genomic_DNA"/>
</dbReference>
<dbReference type="RefSeq" id="WP_011128063.1">
    <property type="nucleotide sequence ID" value="NC_005070.1"/>
</dbReference>
<dbReference type="SMR" id="Q7U6Y8"/>
<dbReference type="STRING" id="84588.SYNW1198"/>
<dbReference type="KEGG" id="syw:SYNW1198"/>
<dbReference type="eggNOG" id="COG1633">
    <property type="taxonomic scope" value="Bacteria"/>
</dbReference>
<dbReference type="HOGENOM" id="CLU_048037_0_0_3"/>
<dbReference type="UniPathway" id="UPA00670"/>
<dbReference type="Proteomes" id="UP000001422">
    <property type="component" value="Chromosome"/>
</dbReference>
<dbReference type="GO" id="GO:0005506">
    <property type="term" value="F:iron ion binding"/>
    <property type="evidence" value="ECO:0007669"/>
    <property type="project" value="UniProtKB-UniRule"/>
</dbReference>
<dbReference type="GO" id="GO:0048529">
    <property type="term" value="F:magnesium-protoporphyrin IX monomethyl ester (oxidative) cyclase activity"/>
    <property type="evidence" value="ECO:0007669"/>
    <property type="project" value="UniProtKB-UniRule"/>
</dbReference>
<dbReference type="GO" id="GO:0036068">
    <property type="term" value="P:light-independent chlorophyll biosynthetic process"/>
    <property type="evidence" value="ECO:0007669"/>
    <property type="project" value="UniProtKB-UniRule"/>
</dbReference>
<dbReference type="GO" id="GO:0015979">
    <property type="term" value="P:photosynthesis"/>
    <property type="evidence" value="ECO:0007669"/>
    <property type="project" value="UniProtKB-UniRule"/>
</dbReference>
<dbReference type="CDD" id="cd01047">
    <property type="entry name" value="ACSF"/>
    <property type="match status" value="1"/>
</dbReference>
<dbReference type="HAMAP" id="MF_01840">
    <property type="entry name" value="AcsF"/>
    <property type="match status" value="1"/>
</dbReference>
<dbReference type="InterPro" id="IPR008434">
    <property type="entry name" value="AcsF"/>
</dbReference>
<dbReference type="InterPro" id="IPR009078">
    <property type="entry name" value="Ferritin-like_SF"/>
</dbReference>
<dbReference type="InterPro" id="IPR003251">
    <property type="entry name" value="Rr_diiron-bd_dom"/>
</dbReference>
<dbReference type="NCBIfam" id="TIGR02029">
    <property type="entry name" value="AcsF"/>
    <property type="match status" value="1"/>
</dbReference>
<dbReference type="NCBIfam" id="NF010172">
    <property type="entry name" value="PRK13654.1"/>
    <property type="match status" value="1"/>
</dbReference>
<dbReference type="PANTHER" id="PTHR31053">
    <property type="entry name" value="MAGNESIUM-PROTOPORPHYRIN IX MONOMETHYL ESTER [OXIDATIVE] CYCLASE, CHLOROPLASTIC"/>
    <property type="match status" value="1"/>
</dbReference>
<dbReference type="PANTHER" id="PTHR31053:SF2">
    <property type="entry name" value="MAGNESIUM-PROTOPORPHYRIN IX MONOMETHYL ESTER [OXIDATIVE] CYCLASE, CHLOROPLASTIC"/>
    <property type="match status" value="1"/>
</dbReference>
<dbReference type="Pfam" id="PF02915">
    <property type="entry name" value="Rubrerythrin"/>
    <property type="match status" value="1"/>
</dbReference>
<dbReference type="SUPFAM" id="SSF47240">
    <property type="entry name" value="Ferritin-like"/>
    <property type="match status" value="1"/>
</dbReference>
<sequence>MVPPTAVAEANAVATKDPVKDTILTPRFYTTDFDDMAAMDLRPNEAELEAICEEFRKDYNRHHFVRNDDFDGAADKLDPETRRVFVEFLEQSCTSEFSGFLLYKELSRRIKQQNPLLAECFAHMARDEARHAGFLNKAMSDFGMQLDLGFLTANKDYTFFQPKFIFYATYLSEKIGYWRYIAIYRHLEKNPESKIFPIFNFFENWCQDENRHGDFFDALMKSQPDTVRGPIAKLWCRFFLLAVFATMYVRDVARKEFYEALGLDARTYDKMVIEKTNETTARVFPVVLDVNNPKFWTRLERLVENNAALEAADRSSSPAPLKLFKKLPRWISNGAEMAKLFLMSPIDSAKFQPAVR</sequence>
<name>ACSF_PARMW</name>
<organism>
    <name type="scientific">Parasynechococcus marenigrum (strain WH8102)</name>
    <dbReference type="NCBI Taxonomy" id="84588"/>
    <lineage>
        <taxon>Bacteria</taxon>
        <taxon>Bacillati</taxon>
        <taxon>Cyanobacteriota</taxon>
        <taxon>Cyanophyceae</taxon>
        <taxon>Synechococcales</taxon>
        <taxon>Prochlorococcaceae</taxon>
        <taxon>Parasynechococcus</taxon>
        <taxon>Parasynechococcus marenigrum</taxon>
    </lineage>
</organism>
<gene>
    <name evidence="1" type="primary">acsF</name>
    <name type="ordered locus">SYNW1198</name>
</gene>
<evidence type="ECO:0000255" key="1">
    <source>
        <dbReference type="HAMAP-Rule" id="MF_01840"/>
    </source>
</evidence>
<comment type="function">
    <text evidence="1">Catalyzes the formation of the isocyclic ring in chlorophyll biosynthesis. Mediates the cyclase reaction, which results in the formation of divinylprotochlorophyllide (Pchlide) characteristic of all chlorophylls from magnesium-protoporphyrin IX 13-monomethyl ester (MgPMME).</text>
</comment>
<comment type="catalytic activity">
    <reaction evidence="1">
        <text>Mg-protoporphyrin IX 13-monomethyl ester + 3 NADPH + 3 O2 + 2 H(+) = 3,8-divinyl protochlorophyllide a + 3 NADP(+) + 5 H2O</text>
        <dbReference type="Rhea" id="RHEA:33235"/>
        <dbReference type="ChEBI" id="CHEBI:15377"/>
        <dbReference type="ChEBI" id="CHEBI:15378"/>
        <dbReference type="ChEBI" id="CHEBI:15379"/>
        <dbReference type="ChEBI" id="CHEBI:57783"/>
        <dbReference type="ChEBI" id="CHEBI:58349"/>
        <dbReference type="ChEBI" id="CHEBI:58632"/>
        <dbReference type="ChEBI" id="CHEBI:60491"/>
        <dbReference type="EC" id="1.14.13.81"/>
    </reaction>
</comment>
<comment type="cofactor">
    <cofactor evidence="1">
        <name>Fe cation</name>
        <dbReference type="ChEBI" id="CHEBI:24875"/>
    </cofactor>
</comment>
<comment type="pathway">
    <text evidence="1">Porphyrin-containing compound metabolism; chlorophyll biosynthesis (light-independent).</text>
</comment>
<comment type="similarity">
    <text evidence="1">Belongs to the AcsF family.</text>
</comment>
<proteinExistence type="inferred from homology"/>
<accession>Q7U6Y8</accession>
<reference key="1">
    <citation type="journal article" date="2003" name="Nature">
        <title>The genome of a motile marine Synechococcus.</title>
        <authorList>
            <person name="Palenik B."/>
            <person name="Brahamsha B."/>
            <person name="Larimer F.W."/>
            <person name="Land M.L."/>
            <person name="Hauser L."/>
            <person name="Chain P."/>
            <person name="Lamerdin J.E."/>
            <person name="Regala W."/>
            <person name="Allen E.E."/>
            <person name="McCarren J."/>
            <person name="Paulsen I.T."/>
            <person name="Dufresne A."/>
            <person name="Partensky F."/>
            <person name="Webb E.A."/>
            <person name="Waterbury J."/>
        </authorList>
    </citation>
    <scope>NUCLEOTIDE SEQUENCE [LARGE SCALE GENOMIC DNA]</scope>
    <source>
        <strain>WH8102</strain>
    </source>
</reference>